<dbReference type="EC" id="2.5.1.75" evidence="1"/>
<dbReference type="EMBL" id="U00019">
    <property type="protein sequence ID" value="AAA17278.1"/>
    <property type="molecule type" value="Genomic_DNA"/>
</dbReference>
<dbReference type="EMBL" id="AL583920">
    <property type="protein sequence ID" value="CAC31376.1"/>
    <property type="molecule type" value="Genomic_DNA"/>
</dbReference>
<dbReference type="PIR" id="S72942">
    <property type="entry name" value="S72942"/>
</dbReference>
<dbReference type="RefSeq" id="NP_301737.1">
    <property type="nucleotide sequence ID" value="NC_002677.1"/>
</dbReference>
<dbReference type="RefSeq" id="WP_010908061.1">
    <property type="nucleotide sequence ID" value="NC_002677.1"/>
</dbReference>
<dbReference type="SMR" id="P46811"/>
<dbReference type="STRING" id="272631.gene:17574821"/>
<dbReference type="KEGG" id="mle:ML0995"/>
<dbReference type="PATRIC" id="fig|272631.5.peg.1802"/>
<dbReference type="Leproma" id="ML0995"/>
<dbReference type="eggNOG" id="COG0324">
    <property type="taxonomic scope" value="Bacteria"/>
</dbReference>
<dbReference type="HOGENOM" id="CLU_032616_0_1_11"/>
<dbReference type="OrthoDB" id="9776390at2"/>
<dbReference type="Proteomes" id="UP000000806">
    <property type="component" value="Chromosome"/>
</dbReference>
<dbReference type="GO" id="GO:0005524">
    <property type="term" value="F:ATP binding"/>
    <property type="evidence" value="ECO:0007669"/>
    <property type="project" value="UniProtKB-UniRule"/>
</dbReference>
<dbReference type="GO" id="GO:0052381">
    <property type="term" value="F:tRNA dimethylallyltransferase activity"/>
    <property type="evidence" value="ECO:0007669"/>
    <property type="project" value="UniProtKB-UniRule"/>
</dbReference>
<dbReference type="GO" id="GO:0006400">
    <property type="term" value="P:tRNA modification"/>
    <property type="evidence" value="ECO:0007669"/>
    <property type="project" value="TreeGrafter"/>
</dbReference>
<dbReference type="FunFam" id="1.10.20.140:FF:000001">
    <property type="entry name" value="tRNA dimethylallyltransferase"/>
    <property type="match status" value="1"/>
</dbReference>
<dbReference type="Gene3D" id="1.10.20.140">
    <property type="match status" value="1"/>
</dbReference>
<dbReference type="Gene3D" id="3.40.50.300">
    <property type="entry name" value="P-loop containing nucleotide triphosphate hydrolases"/>
    <property type="match status" value="1"/>
</dbReference>
<dbReference type="HAMAP" id="MF_00185">
    <property type="entry name" value="IPP_trans"/>
    <property type="match status" value="1"/>
</dbReference>
<dbReference type="InterPro" id="IPR039657">
    <property type="entry name" value="Dimethylallyltransferase"/>
</dbReference>
<dbReference type="InterPro" id="IPR018022">
    <property type="entry name" value="IPT"/>
</dbReference>
<dbReference type="InterPro" id="IPR027417">
    <property type="entry name" value="P-loop_NTPase"/>
</dbReference>
<dbReference type="NCBIfam" id="TIGR00174">
    <property type="entry name" value="miaA"/>
    <property type="match status" value="1"/>
</dbReference>
<dbReference type="PANTHER" id="PTHR11088">
    <property type="entry name" value="TRNA DIMETHYLALLYLTRANSFERASE"/>
    <property type="match status" value="1"/>
</dbReference>
<dbReference type="PANTHER" id="PTHR11088:SF60">
    <property type="entry name" value="TRNA DIMETHYLALLYLTRANSFERASE"/>
    <property type="match status" value="1"/>
</dbReference>
<dbReference type="Pfam" id="PF01715">
    <property type="entry name" value="IPPT"/>
    <property type="match status" value="1"/>
</dbReference>
<dbReference type="SUPFAM" id="SSF52540">
    <property type="entry name" value="P-loop containing nucleoside triphosphate hydrolases"/>
    <property type="match status" value="1"/>
</dbReference>
<gene>
    <name evidence="1" type="primary">miaA</name>
    <name type="ordered locus">ML0995</name>
    <name type="ORF">B2235_C3_232</name>
</gene>
<feature type="chain" id="PRO_0000163940" description="tRNA dimethylallyltransferase">
    <location>
        <begin position="1"/>
        <end position="311"/>
    </location>
</feature>
<feature type="binding site" evidence="1">
    <location>
        <begin position="8"/>
        <end position="15"/>
    </location>
    <ligand>
        <name>ATP</name>
        <dbReference type="ChEBI" id="CHEBI:30616"/>
    </ligand>
</feature>
<feature type="binding site" evidence="1">
    <location>
        <begin position="10"/>
        <end position="15"/>
    </location>
    <ligand>
        <name>substrate</name>
    </ligand>
</feature>
<feature type="site" description="Interaction with substrate tRNA" evidence="1">
    <location>
        <position position="103"/>
    </location>
</feature>
<feature type="site" description="Interaction with substrate tRNA" evidence="1">
    <location>
        <position position="124"/>
    </location>
</feature>
<keyword id="KW-0067">ATP-binding</keyword>
<keyword id="KW-0460">Magnesium</keyword>
<keyword id="KW-0547">Nucleotide-binding</keyword>
<keyword id="KW-1185">Reference proteome</keyword>
<keyword id="KW-0808">Transferase</keyword>
<keyword id="KW-0819">tRNA processing</keyword>
<protein>
    <recommendedName>
        <fullName evidence="1">tRNA dimethylallyltransferase</fullName>
        <ecNumber evidence="1">2.5.1.75</ecNumber>
    </recommendedName>
    <alternativeName>
        <fullName evidence="1">Dimethylallyl diphosphate:tRNA dimethylallyltransferase</fullName>
        <shortName evidence="1">DMAPP:tRNA dimethylallyltransferase</shortName>
        <shortName evidence="1">DMATase</shortName>
    </alternativeName>
    <alternativeName>
        <fullName evidence="1">Isopentenyl-diphosphate:tRNA isopentenyltransferase</fullName>
        <shortName evidence="1">IPP transferase</shortName>
        <shortName evidence="1">IPPT</shortName>
        <shortName evidence="1">IPTase</shortName>
    </alternativeName>
</protein>
<comment type="function">
    <text evidence="1">Catalyzes the transfer of a dimethylallyl group onto the adenine at position 37 in tRNAs that read codons beginning with uridine, leading to the formation of N6-(dimethylallyl)adenosine (i(6)A).</text>
</comment>
<comment type="catalytic activity">
    <reaction evidence="1">
        <text>adenosine(37) in tRNA + dimethylallyl diphosphate = N(6)-dimethylallyladenosine(37) in tRNA + diphosphate</text>
        <dbReference type="Rhea" id="RHEA:26482"/>
        <dbReference type="Rhea" id="RHEA-COMP:10162"/>
        <dbReference type="Rhea" id="RHEA-COMP:10375"/>
        <dbReference type="ChEBI" id="CHEBI:33019"/>
        <dbReference type="ChEBI" id="CHEBI:57623"/>
        <dbReference type="ChEBI" id="CHEBI:74411"/>
        <dbReference type="ChEBI" id="CHEBI:74415"/>
        <dbReference type="EC" id="2.5.1.75"/>
    </reaction>
</comment>
<comment type="cofactor">
    <cofactor evidence="1">
        <name>Mg(2+)</name>
        <dbReference type="ChEBI" id="CHEBI:18420"/>
    </cofactor>
</comment>
<comment type="subunit">
    <text evidence="1">Monomer.</text>
</comment>
<comment type="similarity">
    <text evidence="1">Belongs to the IPP transferase family.</text>
</comment>
<reference key="1">
    <citation type="submission" date="1994-03" db="EMBL/GenBank/DDBJ databases">
        <authorList>
            <person name="Smith D.R."/>
            <person name="Robison K."/>
        </authorList>
    </citation>
    <scope>NUCLEOTIDE SEQUENCE [GENOMIC DNA]</scope>
</reference>
<reference key="2">
    <citation type="journal article" date="2001" name="Nature">
        <title>Massive gene decay in the leprosy bacillus.</title>
        <authorList>
            <person name="Cole S.T."/>
            <person name="Eiglmeier K."/>
            <person name="Parkhill J."/>
            <person name="James K.D."/>
            <person name="Thomson N.R."/>
            <person name="Wheeler P.R."/>
            <person name="Honore N."/>
            <person name="Garnier T."/>
            <person name="Churcher C.M."/>
            <person name="Harris D.E."/>
            <person name="Mungall K.L."/>
            <person name="Basham D."/>
            <person name="Brown D."/>
            <person name="Chillingworth T."/>
            <person name="Connor R."/>
            <person name="Davies R.M."/>
            <person name="Devlin K."/>
            <person name="Duthoy S."/>
            <person name="Feltwell T."/>
            <person name="Fraser A."/>
            <person name="Hamlin N."/>
            <person name="Holroyd S."/>
            <person name="Hornsby T."/>
            <person name="Jagels K."/>
            <person name="Lacroix C."/>
            <person name="Maclean J."/>
            <person name="Moule S."/>
            <person name="Murphy L.D."/>
            <person name="Oliver K."/>
            <person name="Quail M.A."/>
            <person name="Rajandream M.A."/>
            <person name="Rutherford K.M."/>
            <person name="Rutter S."/>
            <person name="Seeger K."/>
            <person name="Simon S."/>
            <person name="Simmonds M."/>
            <person name="Skelton J."/>
            <person name="Squares R."/>
            <person name="Squares S."/>
            <person name="Stevens K."/>
            <person name="Taylor K."/>
            <person name="Whitehead S."/>
            <person name="Woodward J.R."/>
            <person name="Barrell B.G."/>
        </authorList>
    </citation>
    <scope>NUCLEOTIDE SEQUENCE [LARGE SCALE GENOMIC DNA]</scope>
    <source>
        <strain>TN</strain>
    </source>
</reference>
<proteinExistence type="inferred from homology"/>
<sequence length="311" mass="34054">MRPLAIVGPTGVGKSELALDVIERLGGQVSVEIVNADAMQLYRGMDIGTAKLPVAARRGIPHHQLDVLDVTETATVASYQRTAAADIEAIAARGAVPVVVGGSMLYVQSLLDDWSFPGTDPAVRVRWEQQLAEVGVVRLHAELARRDLAAAAAILPTDGRRTVRALEVVELTGKPFAASAPRIGAPRWDTVIVGLDCDRTILSERLARRIDSMFGQGLVDEVRMLLRWGLRDGVTASRALGYAQVLTALDAGGDADHLDEARQQTYLGHRRYARRQRSWFHRDHRVHWLDVGTVDRVGVVDDALRVWRNAS</sequence>
<name>MIAA_MYCLE</name>
<organism>
    <name type="scientific">Mycobacterium leprae (strain TN)</name>
    <dbReference type="NCBI Taxonomy" id="272631"/>
    <lineage>
        <taxon>Bacteria</taxon>
        <taxon>Bacillati</taxon>
        <taxon>Actinomycetota</taxon>
        <taxon>Actinomycetes</taxon>
        <taxon>Mycobacteriales</taxon>
        <taxon>Mycobacteriaceae</taxon>
        <taxon>Mycobacterium</taxon>
    </lineage>
</organism>
<accession>P46811</accession>
<evidence type="ECO:0000255" key="1">
    <source>
        <dbReference type="HAMAP-Rule" id="MF_00185"/>
    </source>
</evidence>